<dbReference type="EC" id="2.3.2.27"/>
<dbReference type="EMBL" id="AF078683">
    <property type="protein sequence ID" value="AAC68664.1"/>
    <property type="molecule type" value="mRNA"/>
</dbReference>
<dbReference type="EMBL" id="AL096882">
    <property type="protein sequence ID" value="CAB51421.1"/>
    <property type="molecule type" value="Genomic_DNA"/>
</dbReference>
<dbReference type="EMBL" id="AL161531">
    <property type="protein sequence ID" value="CAB81238.1"/>
    <property type="molecule type" value="Genomic_DNA"/>
</dbReference>
<dbReference type="EMBL" id="CP002687">
    <property type="protein sequence ID" value="AEE83002.1"/>
    <property type="molecule type" value="Genomic_DNA"/>
</dbReference>
<dbReference type="EMBL" id="AY086119">
    <property type="protein sequence ID" value="AAM63325.1"/>
    <property type="molecule type" value="mRNA"/>
</dbReference>
<dbReference type="PIR" id="T13028">
    <property type="entry name" value="T13028"/>
</dbReference>
<dbReference type="PIR" id="T51840">
    <property type="entry name" value="T51840"/>
</dbReference>
<dbReference type="RefSeq" id="NP_192876.1">
    <property type="nucleotide sequence ID" value="NM_117208.4"/>
</dbReference>
<dbReference type="SMR" id="Q9SUS4"/>
<dbReference type="BioGRID" id="12038">
    <property type="interactions" value="11"/>
</dbReference>
<dbReference type="IntAct" id="Q9SUS4">
    <property type="interactions" value="10"/>
</dbReference>
<dbReference type="STRING" id="3702.Q9SUS4"/>
<dbReference type="PaxDb" id="3702-AT4G11370.1"/>
<dbReference type="EnsemblPlants" id="AT4G11370.1">
    <property type="protein sequence ID" value="AT4G11370.1"/>
    <property type="gene ID" value="AT4G11370"/>
</dbReference>
<dbReference type="GeneID" id="826739"/>
<dbReference type="Gramene" id="AT4G11370.1">
    <property type="protein sequence ID" value="AT4G11370.1"/>
    <property type="gene ID" value="AT4G11370"/>
</dbReference>
<dbReference type="KEGG" id="ath:AT4G11370"/>
<dbReference type="Araport" id="AT4G11370"/>
<dbReference type="TAIR" id="AT4G11370">
    <property type="gene designation" value="RHA1A"/>
</dbReference>
<dbReference type="eggNOG" id="KOG0800">
    <property type="taxonomic scope" value="Eukaryota"/>
</dbReference>
<dbReference type="HOGENOM" id="CLU_013137_18_2_1"/>
<dbReference type="InParanoid" id="Q9SUS4"/>
<dbReference type="OMA" id="MINALCP"/>
<dbReference type="PhylomeDB" id="Q9SUS4"/>
<dbReference type="UniPathway" id="UPA00143"/>
<dbReference type="PRO" id="PR:Q9SUS4"/>
<dbReference type="Proteomes" id="UP000006548">
    <property type="component" value="Chromosome 4"/>
</dbReference>
<dbReference type="ExpressionAtlas" id="Q9SUS4">
    <property type="expression patterns" value="baseline and differential"/>
</dbReference>
<dbReference type="GO" id="GO:0016740">
    <property type="term" value="F:transferase activity"/>
    <property type="evidence" value="ECO:0007669"/>
    <property type="project" value="UniProtKB-KW"/>
</dbReference>
<dbReference type="GO" id="GO:0008270">
    <property type="term" value="F:zinc ion binding"/>
    <property type="evidence" value="ECO:0007669"/>
    <property type="project" value="UniProtKB-KW"/>
</dbReference>
<dbReference type="GO" id="GO:0016567">
    <property type="term" value="P:protein ubiquitination"/>
    <property type="evidence" value="ECO:0007669"/>
    <property type="project" value="UniProtKB-UniPathway"/>
</dbReference>
<dbReference type="CDD" id="cd23121">
    <property type="entry name" value="RING-H2_RHA1-like"/>
    <property type="match status" value="1"/>
</dbReference>
<dbReference type="Gene3D" id="3.30.40.10">
    <property type="entry name" value="Zinc/RING finger domain, C3HC4 (zinc finger)"/>
    <property type="match status" value="1"/>
</dbReference>
<dbReference type="InterPro" id="IPR001841">
    <property type="entry name" value="Znf_RING"/>
</dbReference>
<dbReference type="InterPro" id="IPR013083">
    <property type="entry name" value="Znf_RING/FYVE/PHD"/>
</dbReference>
<dbReference type="PANTHER" id="PTHR45969:SF12">
    <property type="entry name" value="E3 UBIQUITIN-PROTEIN LIGASE RHA1A-RELATED"/>
    <property type="match status" value="1"/>
</dbReference>
<dbReference type="PANTHER" id="PTHR45969">
    <property type="entry name" value="RING ZINC FINGER PROTEIN-RELATED"/>
    <property type="match status" value="1"/>
</dbReference>
<dbReference type="Pfam" id="PF13639">
    <property type="entry name" value="zf-RING_2"/>
    <property type="match status" value="1"/>
</dbReference>
<dbReference type="SMART" id="SM00184">
    <property type="entry name" value="RING"/>
    <property type="match status" value="1"/>
</dbReference>
<dbReference type="SUPFAM" id="SSF57850">
    <property type="entry name" value="RING/U-box"/>
    <property type="match status" value="1"/>
</dbReference>
<dbReference type="PROSITE" id="PS50089">
    <property type="entry name" value="ZF_RING_2"/>
    <property type="match status" value="1"/>
</dbReference>
<reference key="1">
    <citation type="journal article" date="1998" name="FEBS Lett.">
        <title>Widespread occurrence of a highly conserved RING-H2 zinc finger motif in the model plant Arabidopsis thaliana.</title>
        <authorList>
            <person name="Jensen R.B."/>
            <person name="Jensen K.L."/>
            <person name="Jespersen H.M."/>
            <person name="Skriver K."/>
        </authorList>
    </citation>
    <scope>NUCLEOTIDE SEQUENCE [MRNA]</scope>
    <scope>TISSUE SPECIFICITY</scope>
    <source>
        <strain>cv. Columbia</strain>
    </source>
</reference>
<reference key="2">
    <citation type="journal article" date="1999" name="Nature">
        <title>Sequence and analysis of chromosome 4 of the plant Arabidopsis thaliana.</title>
        <authorList>
            <person name="Mayer K.F.X."/>
            <person name="Schueller C."/>
            <person name="Wambutt R."/>
            <person name="Murphy G."/>
            <person name="Volckaert G."/>
            <person name="Pohl T."/>
            <person name="Duesterhoeft A."/>
            <person name="Stiekema W."/>
            <person name="Entian K.-D."/>
            <person name="Terryn N."/>
            <person name="Harris B."/>
            <person name="Ansorge W."/>
            <person name="Brandt P."/>
            <person name="Grivell L.A."/>
            <person name="Rieger M."/>
            <person name="Weichselgartner M."/>
            <person name="de Simone V."/>
            <person name="Obermaier B."/>
            <person name="Mache R."/>
            <person name="Mueller M."/>
            <person name="Kreis M."/>
            <person name="Delseny M."/>
            <person name="Puigdomenech P."/>
            <person name="Watson M."/>
            <person name="Schmidtheini T."/>
            <person name="Reichert B."/>
            <person name="Portetelle D."/>
            <person name="Perez-Alonso M."/>
            <person name="Boutry M."/>
            <person name="Bancroft I."/>
            <person name="Vos P."/>
            <person name="Hoheisel J."/>
            <person name="Zimmermann W."/>
            <person name="Wedler H."/>
            <person name="Ridley P."/>
            <person name="Langham S.-A."/>
            <person name="McCullagh B."/>
            <person name="Bilham L."/>
            <person name="Robben J."/>
            <person name="van der Schueren J."/>
            <person name="Grymonprez B."/>
            <person name="Chuang Y.-J."/>
            <person name="Vandenbussche F."/>
            <person name="Braeken M."/>
            <person name="Weltjens I."/>
            <person name="Voet M."/>
            <person name="Bastiaens I."/>
            <person name="Aert R."/>
            <person name="Defoor E."/>
            <person name="Weitzenegger T."/>
            <person name="Bothe G."/>
            <person name="Ramsperger U."/>
            <person name="Hilbert H."/>
            <person name="Braun M."/>
            <person name="Holzer E."/>
            <person name="Brandt A."/>
            <person name="Peters S."/>
            <person name="van Staveren M."/>
            <person name="Dirkse W."/>
            <person name="Mooijman P."/>
            <person name="Klein Lankhorst R."/>
            <person name="Rose M."/>
            <person name="Hauf J."/>
            <person name="Koetter P."/>
            <person name="Berneiser S."/>
            <person name="Hempel S."/>
            <person name="Feldpausch M."/>
            <person name="Lamberth S."/>
            <person name="Van den Daele H."/>
            <person name="De Keyser A."/>
            <person name="Buysshaert C."/>
            <person name="Gielen J."/>
            <person name="Villarroel R."/>
            <person name="De Clercq R."/>
            <person name="van Montagu M."/>
            <person name="Rogers J."/>
            <person name="Cronin A."/>
            <person name="Quail M.A."/>
            <person name="Bray-Allen S."/>
            <person name="Clark L."/>
            <person name="Doggett J."/>
            <person name="Hall S."/>
            <person name="Kay M."/>
            <person name="Lennard N."/>
            <person name="McLay K."/>
            <person name="Mayes R."/>
            <person name="Pettett A."/>
            <person name="Rajandream M.A."/>
            <person name="Lyne M."/>
            <person name="Benes V."/>
            <person name="Rechmann S."/>
            <person name="Borkova D."/>
            <person name="Bloecker H."/>
            <person name="Scharfe M."/>
            <person name="Grimm M."/>
            <person name="Loehnert T.-H."/>
            <person name="Dose S."/>
            <person name="de Haan M."/>
            <person name="Maarse A.C."/>
            <person name="Schaefer M."/>
            <person name="Mueller-Auer S."/>
            <person name="Gabel C."/>
            <person name="Fuchs M."/>
            <person name="Fartmann B."/>
            <person name="Granderath K."/>
            <person name="Dauner D."/>
            <person name="Herzl A."/>
            <person name="Neumann S."/>
            <person name="Argiriou A."/>
            <person name="Vitale D."/>
            <person name="Liguori R."/>
            <person name="Piravandi E."/>
            <person name="Massenet O."/>
            <person name="Quigley F."/>
            <person name="Clabauld G."/>
            <person name="Muendlein A."/>
            <person name="Felber R."/>
            <person name="Schnabl S."/>
            <person name="Hiller R."/>
            <person name="Schmidt W."/>
            <person name="Lecharny A."/>
            <person name="Aubourg S."/>
            <person name="Chefdor F."/>
            <person name="Cooke R."/>
            <person name="Berger C."/>
            <person name="Monfort A."/>
            <person name="Casacuberta E."/>
            <person name="Gibbons T."/>
            <person name="Weber N."/>
            <person name="Vandenbol M."/>
            <person name="Bargues M."/>
            <person name="Terol J."/>
            <person name="Torres A."/>
            <person name="Perez-Perez A."/>
            <person name="Purnelle B."/>
            <person name="Bent E."/>
            <person name="Johnson S."/>
            <person name="Tacon D."/>
            <person name="Jesse T."/>
            <person name="Heijnen L."/>
            <person name="Schwarz S."/>
            <person name="Scholler P."/>
            <person name="Heber S."/>
            <person name="Francs P."/>
            <person name="Bielke C."/>
            <person name="Frishman D."/>
            <person name="Haase D."/>
            <person name="Lemcke K."/>
            <person name="Mewes H.-W."/>
            <person name="Stocker S."/>
            <person name="Zaccaria P."/>
            <person name="Bevan M."/>
            <person name="Wilson R.K."/>
            <person name="de la Bastide M."/>
            <person name="Habermann K."/>
            <person name="Parnell L."/>
            <person name="Dedhia N."/>
            <person name="Gnoj L."/>
            <person name="Schutz K."/>
            <person name="Huang E."/>
            <person name="Spiegel L."/>
            <person name="Sekhon M."/>
            <person name="Murray J."/>
            <person name="Sheet P."/>
            <person name="Cordes M."/>
            <person name="Abu-Threideh J."/>
            <person name="Stoneking T."/>
            <person name="Kalicki J."/>
            <person name="Graves T."/>
            <person name="Harmon G."/>
            <person name="Edwards J."/>
            <person name="Latreille P."/>
            <person name="Courtney L."/>
            <person name="Cloud J."/>
            <person name="Abbott A."/>
            <person name="Scott K."/>
            <person name="Johnson D."/>
            <person name="Minx P."/>
            <person name="Bentley D."/>
            <person name="Fulton B."/>
            <person name="Miller N."/>
            <person name="Greco T."/>
            <person name="Kemp K."/>
            <person name="Kramer J."/>
            <person name="Fulton L."/>
            <person name="Mardis E."/>
            <person name="Dante M."/>
            <person name="Pepin K."/>
            <person name="Hillier L.W."/>
            <person name="Nelson J."/>
            <person name="Spieth J."/>
            <person name="Ryan E."/>
            <person name="Andrews S."/>
            <person name="Geisel C."/>
            <person name="Layman D."/>
            <person name="Du H."/>
            <person name="Ali J."/>
            <person name="Berghoff A."/>
            <person name="Jones K."/>
            <person name="Drone K."/>
            <person name="Cotton M."/>
            <person name="Joshu C."/>
            <person name="Antonoiu B."/>
            <person name="Zidanic M."/>
            <person name="Strong C."/>
            <person name="Sun H."/>
            <person name="Lamar B."/>
            <person name="Yordan C."/>
            <person name="Ma P."/>
            <person name="Zhong J."/>
            <person name="Preston R."/>
            <person name="Vil D."/>
            <person name="Shekher M."/>
            <person name="Matero A."/>
            <person name="Shah R."/>
            <person name="Swaby I.K."/>
            <person name="O'Shaughnessy A."/>
            <person name="Rodriguez M."/>
            <person name="Hoffman J."/>
            <person name="Till S."/>
            <person name="Granat S."/>
            <person name="Shohdy N."/>
            <person name="Hasegawa A."/>
            <person name="Hameed A."/>
            <person name="Lodhi M."/>
            <person name="Johnson A."/>
            <person name="Chen E."/>
            <person name="Marra M.A."/>
            <person name="Martienssen R."/>
            <person name="McCombie W.R."/>
        </authorList>
    </citation>
    <scope>NUCLEOTIDE SEQUENCE [LARGE SCALE GENOMIC DNA]</scope>
    <source>
        <strain>cv. Columbia</strain>
    </source>
</reference>
<reference key="3">
    <citation type="journal article" date="2017" name="Plant J.">
        <title>Araport11: a complete reannotation of the Arabidopsis thaliana reference genome.</title>
        <authorList>
            <person name="Cheng C.Y."/>
            <person name="Krishnakumar V."/>
            <person name="Chan A.P."/>
            <person name="Thibaud-Nissen F."/>
            <person name="Schobel S."/>
            <person name="Town C.D."/>
        </authorList>
    </citation>
    <scope>GENOME REANNOTATION</scope>
    <source>
        <strain>cv. Columbia</strain>
    </source>
</reference>
<reference key="4">
    <citation type="submission" date="2002-03" db="EMBL/GenBank/DDBJ databases">
        <title>Full-length cDNA from Arabidopsis thaliana.</title>
        <authorList>
            <person name="Brover V.V."/>
            <person name="Troukhan M.E."/>
            <person name="Alexandrov N.A."/>
            <person name="Lu Y.-P."/>
            <person name="Flavell R.B."/>
            <person name="Feldmann K.A."/>
        </authorList>
    </citation>
    <scope>NUCLEOTIDE SEQUENCE [LARGE SCALE MRNA]</scope>
</reference>
<name>RHA1A_ARATH</name>
<comment type="function">
    <text evidence="1">Probable E3 ubiquitin-protein ligase that may possess E3 ubiquitin ligase activity in vitro.</text>
</comment>
<comment type="catalytic activity">
    <reaction>
        <text>S-ubiquitinyl-[E2 ubiquitin-conjugating enzyme]-L-cysteine + [acceptor protein]-L-lysine = [E2 ubiquitin-conjugating enzyme]-L-cysteine + N(6)-ubiquitinyl-[acceptor protein]-L-lysine.</text>
        <dbReference type="EC" id="2.3.2.27"/>
    </reaction>
</comment>
<comment type="pathway">
    <text evidence="5">Protein modification; protein ubiquitination.</text>
</comment>
<comment type="tissue specificity">
    <text evidence="3">Predominantly expressed in stems.</text>
</comment>
<evidence type="ECO:0000250" key="1">
    <source>
        <dbReference type="UniProtKB" id="Q9ZT50"/>
    </source>
</evidence>
<evidence type="ECO:0000255" key="2">
    <source>
        <dbReference type="PROSITE-ProRule" id="PRU00175"/>
    </source>
</evidence>
<evidence type="ECO:0000269" key="3">
    <source>
    </source>
</evidence>
<evidence type="ECO:0000303" key="4">
    <source>
    </source>
</evidence>
<evidence type="ECO:0000305" key="5"/>
<sequence>MGLPEDFITELQIPSYILKILYVIGFFRDIVDALCPYIGLPRFLDHNETSAPDLTRHALSTSASLANELIPVVRFSDLPTDPEDCCTVCLSDFESDDKVRQLPKCGHVFHHYCLDRWIVDYNKMKCPVCRHRFLPKEKYTQSDWGSGSDWFSDEVESTN</sequence>
<proteinExistence type="evidence at transcript level"/>
<gene>
    <name evidence="4" type="primary">RHA1A</name>
    <name type="ordered locus">At4g11370</name>
    <name type="ORF">F8L21.160</name>
</gene>
<organism>
    <name type="scientific">Arabidopsis thaliana</name>
    <name type="common">Mouse-ear cress</name>
    <dbReference type="NCBI Taxonomy" id="3702"/>
    <lineage>
        <taxon>Eukaryota</taxon>
        <taxon>Viridiplantae</taxon>
        <taxon>Streptophyta</taxon>
        <taxon>Embryophyta</taxon>
        <taxon>Tracheophyta</taxon>
        <taxon>Spermatophyta</taxon>
        <taxon>Magnoliopsida</taxon>
        <taxon>eudicotyledons</taxon>
        <taxon>Gunneridae</taxon>
        <taxon>Pentapetalae</taxon>
        <taxon>rosids</taxon>
        <taxon>malvids</taxon>
        <taxon>Brassicales</taxon>
        <taxon>Brassicaceae</taxon>
        <taxon>Camelineae</taxon>
        <taxon>Arabidopsis</taxon>
    </lineage>
</organism>
<feature type="chain" id="PRO_0000056033" description="Probable E3 ubiquitin-protein ligase RHA1A">
    <location>
        <begin position="1"/>
        <end position="159"/>
    </location>
</feature>
<feature type="zinc finger region" description="RING-type; atypical" evidence="2">
    <location>
        <begin position="86"/>
        <end position="130"/>
    </location>
</feature>
<feature type="sequence conflict" description="In Ref. 1; AAC68664 and 4; AAM63325." evidence="5" ref="1 4">
    <original>S</original>
    <variation>G</variation>
    <location>
        <position position="15"/>
    </location>
</feature>
<feature type="sequence conflict" description="In Ref. 1; AAC68664 and 4; AAM63325." evidence="5" ref="1 4">
    <original>I</original>
    <variation>M</variation>
    <location>
        <position position="30"/>
    </location>
</feature>
<feature type="sequence conflict" description="In Ref. 1; AAC68664 and 4; AAM63325." evidence="5" ref="1 4">
    <original>R</original>
    <variation>S</variation>
    <location>
        <position position="42"/>
    </location>
</feature>
<feature type="sequence conflict" description="In Ref. 1; AAC68664 and 4; AAM63325." evidence="5" ref="1 4">
    <original>A</original>
    <variation>G</variation>
    <location>
        <position position="51"/>
    </location>
</feature>
<feature type="sequence conflict" description="In Ref. 1; AAC68664 and 4; AAM63325." evidence="5" ref="1 4">
    <original>L</original>
    <variation>P</variation>
    <location>
        <position position="54"/>
    </location>
</feature>
<feature type="sequence conflict" description="In Ref. 1; AAC68664 and 4; AAM63325." evidence="5" ref="1 4">
    <original>Y</original>
    <variation>H</variation>
    <location>
        <position position="112"/>
    </location>
</feature>
<feature type="sequence conflict" description="In Ref. 1; AAC68664 and 4; AAM63325." evidence="5" ref="1 4">
    <original>S</original>
    <variation>C</variation>
    <location>
        <position position="142"/>
    </location>
</feature>
<protein>
    <recommendedName>
        <fullName evidence="5">Probable E3 ubiquitin-protein ligase RHA1A</fullName>
        <ecNumber>2.3.2.27</ecNumber>
    </recommendedName>
    <alternativeName>
        <fullName evidence="4">RING-H2 finger A1a</fullName>
    </alternativeName>
    <alternativeName>
        <fullName evidence="5">RING-H2 zinc finger protein RHA1a</fullName>
    </alternativeName>
    <alternativeName>
        <fullName evidence="5">RING-type E3 ubiquitin transferase RHA1A</fullName>
    </alternativeName>
</protein>
<keyword id="KW-0479">Metal-binding</keyword>
<keyword id="KW-1185">Reference proteome</keyword>
<keyword id="KW-0808">Transferase</keyword>
<keyword id="KW-0833">Ubl conjugation pathway</keyword>
<keyword id="KW-0862">Zinc</keyword>
<keyword id="KW-0863">Zinc-finger</keyword>
<accession>Q9SUS4</accession>
<accession>Q9ZT52</accession>